<feature type="chain" id="PRO_0000073195" description="Ovomucoid">
    <location>
        <begin position="1" status="less than"/>
        <end position="54" status="greater than"/>
    </location>
</feature>
<feature type="domain" description="Kazal-like" evidence="1">
    <location>
        <begin position="4"/>
        <end position="54"/>
    </location>
</feature>
<feature type="site" description="Reactive bond 3">
    <location>
        <begin position="16"/>
        <end position="17"/>
    </location>
</feature>
<feature type="glycosylation site" description="N-linked (GlcNAc...) asparagine" evidence="2">
    <location>
        <position position="43"/>
    </location>
</feature>
<feature type="disulfide bond">
    <location>
        <begin position="6"/>
        <end position="36"/>
    </location>
</feature>
<feature type="disulfide bond">
    <location>
        <begin position="14"/>
        <end position="33"/>
    </location>
</feature>
<feature type="disulfide bond">
    <location>
        <begin position="22"/>
        <end position="54"/>
    </location>
</feature>
<feature type="non-terminal residue">
    <location>
        <position position="1"/>
    </location>
</feature>
<feature type="non-terminal residue">
    <location>
        <position position="54"/>
    </location>
</feature>
<sequence>IATVDCSDYPKPVCSLEDMPLCGSDSKTYSNKCNFCNAVVDSNGTLTLSHFGKC</sequence>
<name>IOVO_VULGR</name>
<proteinExistence type="evidence at protein level"/>
<protein>
    <recommendedName>
        <fullName>Ovomucoid</fullName>
    </recommendedName>
</protein>
<accession>P20846</accession>
<comment type="subcellular location">
    <subcellularLocation>
        <location>Secreted</location>
    </subcellularLocation>
</comment>
<comment type="domain">
    <text>Avian ovomucoid consists of three homologous, tandem Kazal family inhibitory domains.</text>
</comment>
<reference key="1">
    <citation type="journal article" date="1990" name="J. Protein Chem.">
        <title>Amino acid sequences of ovomucoid third domain from 25 additional species of birds.</title>
        <authorList>
            <person name="Laskowski M. Jr."/>
            <person name="Apostol I."/>
            <person name="Ardelt W."/>
            <person name="Cook J."/>
            <person name="Giletto A."/>
            <person name="Kelly C.A."/>
            <person name="Lu W."/>
            <person name="Park S.J."/>
            <person name="Qasim M.A."/>
            <person name="Whatley H.E."/>
            <person name="Wieczorek A."/>
            <person name="Wynn R."/>
        </authorList>
    </citation>
    <scope>PROTEIN SEQUENCE</scope>
</reference>
<evidence type="ECO:0000255" key="1">
    <source>
        <dbReference type="PROSITE-ProRule" id="PRU00798"/>
    </source>
</evidence>
<evidence type="ECO:0000269" key="2">
    <source>
    </source>
</evidence>
<dbReference type="PIR" id="F61492">
    <property type="entry name" value="F61492"/>
</dbReference>
<dbReference type="SMR" id="P20846"/>
<dbReference type="iPTMnet" id="P20846"/>
<dbReference type="GO" id="GO:0005576">
    <property type="term" value="C:extracellular region"/>
    <property type="evidence" value="ECO:0007669"/>
    <property type="project" value="UniProtKB-SubCell"/>
</dbReference>
<dbReference type="GO" id="GO:0004867">
    <property type="term" value="F:serine-type endopeptidase inhibitor activity"/>
    <property type="evidence" value="ECO:0007669"/>
    <property type="project" value="UniProtKB-KW"/>
</dbReference>
<dbReference type="CDD" id="cd00104">
    <property type="entry name" value="KAZAL_FS"/>
    <property type="match status" value="1"/>
</dbReference>
<dbReference type="FunFam" id="3.30.60.30:FF:000037">
    <property type="entry name" value="Ovomucoid"/>
    <property type="match status" value="1"/>
</dbReference>
<dbReference type="Gene3D" id="3.30.60.30">
    <property type="match status" value="1"/>
</dbReference>
<dbReference type="InterPro" id="IPR051597">
    <property type="entry name" value="Bifunctional_prot_inhibitor"/>
</dbReference>
<dbReference type="InterPro" id="IPR002350">
    <property type="entry name" value="Kazal_dom"/>
</dbReference>
<dbReference type="InterPro" id="IPR036058">
    <property type="entry name" value="Kazal_dom_sf"/>
</dbReference>
<dbReference type="PANTHER" id="PTHR47729:SF1">
    <property type="entry name" value="OVOMUCOID-LIKE-RELATED"/>
    <property type="match status" value="1"/>
</dbReference>
<dbReference type="PANTHER" id="PTHR47729">
    <property type="entry name" value="SERINE PEPTIDASE INHIBITOR, KAZAL TYPE 2, TANDEM DUPLICATE 1-RELATED"/>
    <property type="match status" value="1"/>
</dbReference>
<dbReference type="Pfam" id="PF00050">
    <property type="entry name" value="Kazal_1"/>
    <property type="match status" value="1"/>
</dbReference>
<dbReference type="SMART" id="SM00280">
    <property type="entry name" value="KAZAL"/>
    <property type="match status" value="1"/>
</dbReference>
<dbReference type="SUPFAM" id="SSF100895">
    <property type="entry name" value="Kazal-type serine protease inhibitors"/>
    <property type="match status" value="1"/>
</dbReference>
<dbReference type="PROSITE" id="PS00282">
    <property type="entry name" value="KAZAL_1"/>
    <property type="match status" value="1"/>
</dbReference>
<dbReference type="PROSITE" id="PS51465">
    <property type="entry name" value="KAZAL_2"/>
    <property type="match status" value="1"/>
</dbReference>
<organism>
    <name type="scientific">Vultur gryphus</name>
    <name type="common">Andean condor</name>
    <dbReference type="NCBI Taxonomy" id="8924"/>
    <lineage>
        <taxon>Eukaryota</taxon>
        <taxon>Metazoa</taxon>
        <taxon>Chordata</taxon>
        <taxon>Craniata</taxon>
        <taxon>Vertebrata</taxon>
        <taxon>Euteleostomi</taxon>
        <taxon>Archelosauria</taxon>
        <taxon>Archosauria</taxon>
        <taxon>Dinosauria</taxon>
        <taxon>Saurischia</taxon>
        <taxon>Theropoda</taxon>
        <taxon>Coelurosauria</taxon>
        <taxon>Aves</taxon>
        <taxon>Neognathae</taxon>
        <taxon>Neoaves</taxon>
        <taxon>Telluraves</taxon>
        <taxon>Accipitrimorphae</taxon>
        <taxon>Accipitriformes</taxon>
        <taxon>Cathartidae</taxon>
        <taxon>Vultur</taxon>
    </lineage>
</organism>
<keyword id="KW-0903">Direct protein sequencing</keyword>
<keyword id="KW-1015">Disulfide bond</keyword>
<keyword id="KW-0325">Glycoprotein</keyword>
<keyword id="KW-0646">Protease inhibitor</keyword>
<keyword id="KW-0677">Repeat</keyword>
<keyword id="KW-0964">Secreted</keyword>
<keyword id="KW-0722">Serine protease inhibitor</keyword>